<comment type="function">
    <text evidence="1">One of the primary rRNA binding proteins, it binds directly to 16S rRNA where it nucleates assembly of the head domain of the 30S subunit. Is located at the subunit interface close to the decoding center, probably blocks exit of the E-site tRNA.</text>
</comment>
<comment type="subunit">
    <text evidence="1">Part of the 30S ribosomal subunit. Contacts proteins S9 and S11.</text>
</comment>
<comment type="similarity">
    <text evidence="1">Belongs to the universal ribosomal protein uS7 family.</text>
</comment>
<gene>
    <name evidence="1" type="primary">rpsG</name>
    <name type="ordered locus">Bpro_0252</name>
</gene>
<accession>Q12GX5</accession>
<name>RS7_POLSJ</name>
<organism>
    <name type="scientific">Polaromonas sp. (strain JS666 / ATCC BAA-500)</name>
    <dbReference type="NCBI Taxonomy" id="296591"/>
    <lineage>
        <taxon>Bacteria</taxon>
        <taxon>Pseudomonadati</taxon>
        <taxon>Pseudomonadota</taxon>
        <taxon>Betaproteobacteria</taxon>
        <taxon>Burkholderiales</taxon>
        <taxon>Comamonadaceae</taxon>
        <taxon>Polaromonas</taxon>
    </lineage>
</organism>
<dbReference type="EMBL" id="CP000316">
    <property type="protein sequence ID" value="ABE42217.1"/>
    <property type="molecule type" value="Genomic_DNA"/>
</dbReference>
<dbReference type="RefSeq" id="WP_011481226.1">
    <property type="nucleotide sequence ID" value="NZ_FNHX01000006.1"/>
</dbReference>
<dbReference type="SMR" id="Q12GX5"/>
<dbReference type="STRING" id="296591.Bpro_0252"/>
<dbReference type="KEGG" id="pol:Bpro_0252"/>
<dbReference type="eggNOG" id="COG0049">
    <property type="taxonomic scope" value="Bacteria"/>
</dbReference>
<dbReference type="HOGENOM" id="CLU_072226_1_1_4"/>
<dbReference type="OrthoDB" id="9807653at2"/>
<dbReference type="Proteomes" id="UP000001983">
    <property type="component" value="Chromosome"/>
</dbReference>
<dbReference type="GO" id="GO:0015935">
    <property type="term" value="C:small ribosomal subunit"/>
    <property type="evidence" value="ECO:0007669"/>
    <property type="project" value="InterPro"/>
</dbReference>
<dbReference type="GO" id="GO:0019843">
    <property type="term" value="F:rRNA binding"/>
    <property type="evidence" value="ECO:0007669"/>
    <property type="project" value="UniProtKB-UniRule"/>
</dbReference>
<dbReference type="GO" id="GO:0003735">
    <property type="term" value="F:structural constituent of ribosome"/>
    <property type="evidence" value="ECO:0007669"/>
    <property type="project" value="InterPro"/>
</dbReference>
<dbReference type="GO" id="GO:0000049">
    <property type="term" value="F:tRNA binding"/>
    <property type="evidence" value="ECO:0007669"/>
    <property type="project" value="UniProtKB-UniRule"/>
</dbReference>
<dbReference type="GO" id="GO:0006412">
    <property type="term" value="P:translation"/>
    <property type="evidence" value="ECO:0007669"/>
    <property type="project" value="UniProtKB-UniRule"/>
</dbReference>
<dbReference type="CDD" id="cd14869">
    <property type="entry name" value="uS7_Bacteria"/>
    <property type="match status" value="1"/>
</dbReference>
<dbReference type="FunFam" id="1.10.455.10:FF:000001">
    <property type="entry name" value="30S ribosomal protein S7"/>
    <property type="match status" value="1"/>
</dbReference>
<dbReference type="Gene3D" id="1.10.455.10">
    <property type="entry name" value="Ribosomal protein S7 domain"/>
    <property type="match status" value="1"/>
</dbReference>
<dbReference type="HAMAP" id="MF_00480_B">
    <property type="entry name" value="Ribosomal_uS7_B"/>
    <property type="match status" value="1"/>
</dbReference>
<dbReference type="InterPro" id="IPR000235">
    <property type="entry name" value="Ribosomal_uS7"/>
</dbReference>
<dbReference type="InterPro" id="IPR005717">
    <property type="entry name" value="Ribosomal_uS7_bac/org-type"/>
</dbReference>
<dbReference type="InterPro" id="IPR020606">
    <property type="entry name" value="Ribosomal_uS7_CS"/>
</dbReference>
<dbReference type="InterPro" id="IPR023798">
    <property type="entry name" value="Ribosomal_uS7_dom"/>
</dbReference>
<dbReference type="InterPro" id="IPR036823">
    <property type="entry name" value="Ribosomal_uS7_dom_sf"/>
</dbReference>
<dbReference type="NCBIfam" id="TIGR01029">
    <property type="entry name" value="rpsG_bact"/>
    <property type="match status" value="1"/>
</dbReference>
<dbReference type="PANTHER" id="PTHR11205">
    <property type="entry name" value="RIBOSOMAL PROTEIN S7"/>
    <property type="match status" value="1"/>
</dbReference>
<dbReference type="Pfam" id="PF00177">
    <property type="entry name" value="Ribosomal_S7"/>
    <property type="match status" value="1"/>
</dbReference>
<dbReference type="PIRSF" id="PIRSF002122">
    <property type="entry name" value="RPS7p_RPS7a_RPS5e_RPS7o"/>
    <property type="match status" value="1"/>
</dbReference>
<dbReference type="SUPFAM" id="SSF47973">
    <property type="entry name" value="Ribosomal protein S7"/>
    <property type="match status" value="1"/>
</dbReference>
<dbReference type="PROSITE" id="PS00052">
    <property type="entry name" value="RIBOSOMAL_S7"/>
    <property type="match status" value="1"/>
</dbReference>
<sequence length="157" mass="17905">MPRRREVPKREILPDPKFGDVDLAKFMNVIMQGGKKAVAERIIYGALDFIEKKNPGKDPLEAFHMAIGNIKPMVEVKSRRVGGANYQVPVEVRPVRRMALAMRWLKEAAKKRGEKSMSLRLANELMEATEGRGGAMKKRDEVHRMAEANKAFSHFRF</sequence>
<proteinExistence type="inferred from homology"/>
<evidence type="ECO:0000255" key="1">
    <source>
        <dbReference type="HAMAP-Rule" id="MF_00480"/>
    </source>
</evidence>
<evidence type="ECO:0000305" key="2"/>
<keyword id="KW-1185">Reference proteome</keyword>
<keyword id="KW-0687">Ribonucleoprotein</keyword>
<keyword id="KW-0689">Ribosomal protein</keyword>
<keyword id="KW-0694">RNA-binding</keyword>
<keyword id="KW-0699">rRNA-binding</keyword>
<keyword id="KW-0820">tRNA-binding</keyword>
<feature type="chain" id="PRO_1000014253" description="Small ribosomal subunit protein uS7">
    <location>
        <begin position="1"/>
        <end position="157"/>
    </location>
</feature>
<reference key="1">
    <citation type="journal article" date="2008" name="Appl. Environ. Microbiol.">
        <title>The genome of Polaromonas sp. strain JS666: insights into the evolution of a hydrocarbon- and xenobiotic-degrading bacterium, and features of relevance to biotechnology.</title>
        <authorList>
            <person name="Mattes T.E."/>
            <person name="Alexander A.K."/>
            <person name="Richardson P.M."/>
            <person name="Munk A.C."/>
            <person name="Han C.S."/>
            <person name="Stothard P."/>
            <person name="Coleman N.V."/>
        </authorList>
    </citation>
    <scope>NUCLEOTIDE SEQUENCE [LARGE SCALE GENOMIC DNA]</scope>
    <source>
        <strain>JS666 / ATCC BAA-500</strain>
    </source>
</reference>
<protein>
    <recommendedName>
        <fullName evidence="1">Small ribosomal subunit protein uS7</fullName>
    </recommendedName>
    <alternativeName>
        <fullName evidence="2">30S ribosomal protein S7</fullName>
    </alternativeName>
</protein>